<sequence length="885" mass="99690">MFHHRGGCTPRAQTPYAANVPIVAEQQQFQQQIDQTANAMGNFQLNDNAYSFTQPAQQPQQPSSRKVANQLYPVDLFTELPPPIRDLSLPPPPITISQDSIVTPSETSNVPYQYVRSTLNAVPKTSSLLKKTKLPFGIVIRPYLNLQDSSEYVPLNNDGIIVRCRRCRSYLNPFVAFIEQGRRWQCNICRFKNDVPFGFDQNLQGAPINRYERNEIKHSVMEYLAPIEYSVREPPPSTYVFILDVSQNAVRNGLLATSARTILENLESLPNHDGRTSVSIICVDHALHYFYVPLDDDYEESDDDDDEDDDDEEEDNEEEEEEEEDEEDDDDSITEAIQMFDVGDLSEPFLPMPSEELVVPLRYCKKNLEKLLKTIPEVFQDTHISKFALGPALKAASYLISNTGGKIEVISSTLPDTGVGKLKRRAEQGVLNTTKESSQLLSCQDSFYKTFTIECSKMQITVDMFLASEEYMDVATLSHLSRFSGGQTHFYPGFNATSLNDVTKFTRELSKHLSMDISMEAVMRVRGSTGLRATSFFGHFFNRSSDLCAFSTMPRDQSYLFEISIEDSLVAEHCYLQVSTLLTLNTGERRIRVMTLALPTTESGREVYASADQLAITDFITQNAVAKALNSSMDSARDLITKSLQDILSAYKKEISMSNITAVTSLNLCANLRMLPLLMNALGKHIAFRPGMVPSDYRASSLNKLETEPLHYLIKSIYPTVYSLHDIPDEVGLLDSNRETKLPDPINATASLFERYGLYLIDNSTELFLWVGGDAVPELLNDVFNTDNISNVPVGKSELPVLIDSPFNVRLRNIISKIRENNDTITFQSLYTIRGPSINEPANLTAEREMASLRLWVSSTLVEDKILNCASYREYLQSMKTAINR</sequence>
<name>SC241_SACU7</name>
<organism>
    <name type="scientific">Saccharomyces uvarum (strain ATCC 76518 / CBS 7001 / CLIB 283 / NBRC 10550 / MCYC 623 / NCYC 2669 / NRRL Y-11845)</name>
    <name type="common">Yeast</name>
    <name type="synonym">Saccharomyces bayanus var. uvarum</name>
    <dbReference type="NCBI Taxonomy" id="659244"/>
    <lineage>
        <taxon>Eukaryota</taxon>
        <taxon>Fungi</taxon>
        <taxon>Dikarya</taxon>
        <taxon>Ascomycota</taxon>
        <taxon>Saccharomycotina</taxon>
        <taxon>Saccharomycetes</taxon>
        <taxon>Saccharomycetales</taxon>
        <taxon>Saccharomycetaceae</taxon>
        <taxon>Saccharomyces</taxon>
    </lineage>
</organism>
<reference key="1">
    <citation type="journal article" date="2003" name="Nature">
        <title>Yeast genome duplication was followed by asynchronous differentiation of duplicated genes.</title>
        <authorList>
            <person name="Langkjaer R.B."/>
            <person name="Cliften P.F."/>
            <person name="Johnston M."/>
            <person name="Piskur J."/>
        </authorList>
    </citation>
    <scope>NUCLEOTIDE SEQUENCE [GENOMIC DNA]</scope>
    <source>
        <strain>623-6C / CBS 9787 / CLIB 533</strain>
    </source>
</reference>
<proteinExistence type="inferred from homology"/>
<evidence type="ECO:0000250" key="1"/>
<evidence type="ECO:0000256" key="2">
    <source>
        <dbReference type="SAM" id="MobiDB-lite"/>
    </source>
</evidence>
<evidence type="ECO:0000305" key="3"/>
<protein>
    <recommendedName>
        <fullName>Protein transport protein SEC24-1</fullName>
    </recommendedName>
</protein>
<keyword id="KW-0963">Cytoplasm</keyword>
<keyword id="KW-0968">Cytoplasmic vesicle</keyword>
<keyword id="KW-0256">Endoplasmic reticulum</keyword>
<keyword id="KW-0931">ER-Golgi transport</keyword>
<keyword id="KW-0333">Golgi apparatus</keyword>
<keyword id="KW-0472">Membrane</keyword>
<keyword id="KW-0479">Metal-binding</keyword>
<keyword id="KW-0653">Protein transport</keyword>
<keyword id="KW-0813">Transport</keyword>
<keyword id="KW-0862">Zinc</keyword>
<dbReference type="EMBL" id="AY144861">
    <property type="protein sequence ID" value="AAO32425.1"/>
    <property type="molecule type" value="Genomic_DNA"/>
</dbReference>
<dbReference type="SMR" id="Q876F4"/>
<dbReference type="GO" id="GO:0030127">
    <property type="term" value="C:COPII vesicle coat"/>
    <property type="evidence" value="ECO:0007669"/>
    <property type="project" value="InterPro"/>
</dbReference>
<dbReference type="GO" id="GO:0070971">
    <property type="term" value="C:endoplasmic reticulum exit site"/>
    <property type="evidence" value="ECO:0007669"/>
    <property type="project" value="TreeGrafter"/>
</dbReference>
<dbReference type="GO" id="GO:0005789">
    <property type="term" value="C:endoplasmic reticulum membrane"/>
    <property type="evidence" value="ECO:0007669"/>
    <property type="project" value="UniProtKB-SubCell"/>
</dbReference>
<dbReference type="GO" id="GO:0000139">
    <property type="term" value="C:Golgi membrane"/>
    <property type="evidence" value="ECO:0007669"/>
    <property type="project" value="UniProtKB-SubCell"/>
</dbReference>
<dbReference type="GO" id="GO:0000149">
    <property type="term" value="F:SNARE binding"/>
    <property type="evidence" value="ECO:0007669"/>
    <property type="project" value="TreeGrafter"/>
</dbReference>
<dbReference type="GO" id="GO:0008270">
    <property type="term" value="F:zinc ion binding"/>
    <property type="evidence" value="ECO:0007669"/>
    <property type="project" value="InterPro"/>
</dbReference>
<dbReference type="GO" id="GO:0090110">
    <property type="term" value="P:COPII-coated vesicle cargo loading"/>
    <property type="evidence" value="ECO:0007669"/>
    <property type="project" value="TreeGrafter"/>
</dbReference>
<dbReference type="GO" id="GO:0006886">
    <property type="term" value="P:intracellular protein transport"/>
    <property type="evidence" value="ECO:0007669"/>
    <property type="project" value="InterPro"/>
</dbReference>
<dbReference type="CDD" id="cd01479">
    <property type="entry name" value="Sec24-like"/>
    <property type="match status" value="1"/>
</dbReference>
<dbReference type="FunFam" id="3.40.20.10:FF:000049">
    <property type="entry name" value="Vesicle coat component"/>
    <property type="match status" value="1"/>
</dbReference>
<dbReference type="Gene3D" id="2.60.40.1670">
    <property type="entry name" value="beta-sandwich domain of Sec23/24"/>
    <property type="match status" value="1"/>
</dbReference>
<dbReference type="Gene3D" id="1.20.120.730">
    <property type="entry name" value="Sec23/Sec24 helical domain"/>
    <property type="match status" value="1"/>
</dbReference>
<dbReference type="Gene3D" id="3.40.20.10">
    <property type="entry name" value="Severin"/>
    <property type="match status" value="1"/>
</dbReference>
<dbReference type="Gene3D" id="3.40.50.410">
    <property type="entry name" value="von Willebrand factor, type A domain"/>
    <property type="match status" value="1"/>
</dbReference>
<dbReference type="Gene3D" id="2.30.30.380">
    <property type="entry name" value="Zn-finger domain of Sec23/24"/>
    <property type="match status" value="1"/>
</dbReference>
<dbReference type="InterPro" id="IPR029006">
    <property type="entry name" value="ADF-H/Gelsolin-like_dom_sf"/>
</dbReference>
<dbReference type="InterPro" id="IPR007123">
    <property type="entry name" value="Gelsolin-like_dom"/>
</dbReference>
<dbReference type="InterPro" id="IPR036180">
    <property type="entry name" value="Gelsolin-like_dom_sf"/>
</dbReference>
<dbReference type="InterPro" id="IPR006900">
    <property type="entry name" value="Sec23/24_helical_dom"/>
</dbReference>
<dbReference type="InterPro" id="IPR036175">
    <property type="entry name" value="Sec23/24_helical_dom_sf"/>
</dbReference>
<dbReference type="InterPro" id="IPR006896">
    <property type="entry name" value="Sec23/24_trunk_dom"/>
</dbReference>
<dbReference type="InterPro" id="IPR012990">
    <property type="entry name" value="Sec23_24_beta_S"/>
</dbReference>
<dbReference type="InterPro" id="IPR050550">
    <property type="entry name" value="SEC23_SEC24_subfamily"/>
</dbReference>
<dbReference type="InterPro" id="IPR041742">
    <property type="entry name" value="Sec24-like_trunk_dom"/>
</dbReference>
<dbReference type="InterPro" id="IPR036465">
    <property type="entry name" value="vWFA_dom_sf"/>
</dbReference>
<dbReference type="InterPro" id="IPR006895">
    <property type="entry name" value="Znf_Sec23_Sec24"/>
</dbReference>
<dbReference type="InterPro" id="IPR036174">
    <property type="entry name" value="Znf_Sec23_Sec24_sf"/>
</dbReference>
<dbReference type="PANTHER" id="PTHR13803">
    <property type="entry name" value="SEC24-RELATED PROTEIN"/>
    <property type="match status" value="1"/>
</dbReference>
<dbReference type="PANTHER" id="PTHR13803:SF39">
    <property type="entry name" value="SECRETORY 24AB, ISOFORM A"/>
    <property type="match status" value="1"/>
</dbReference>
<dbReference type="Pfam" id="PF00626">
    <property type="entry name" value="Gelsolin"/>
    <property type="match status" value="1"/>
</dbReference>
<dbReference type="Pfam" id="PF08033">
    <property type="entry name" value="Sec23_BS"/>
    <property type="match status" value="1"/>
</dbReference>
<dbReference type="Pfam" id="PF04815">
    <property type="entry name" value="Sec23_helical"/>
    <property type="match status" value="1"/>
</dbReference>
<dbReference type="Pfam" id="PF04811">
    <property type="entry name" value="Sec23_trunk"/>
    <property type="match status" value="1"/>
</dbReference>
<dbReference type="Pfam" id="PF04810">
    <property type="entry name" value="zf-Sec23_Sec24"/>
    <property type="match status" value="1"/>
</dbReference>
<dbReference type="SUPFAM" id="SSF81995">
    <property type="entry name" value="beta-sandwich domain of Sec23/24"/>
    <property type="match status" value="1"/>
</dbReference>
<dbReference type="SUPFAM" id="SSF82754">
    <property type="entry name" value="C-terminal, gelsolin-like domain of Sec23/24"/>
    <property type="match status" value="1"/>
</dbReference>
<dbReference type="SUPFAM" id="SSF81811">
    <property type="entry name" value="Helical domain of Sec23/24"/>
    <property type="match status" value="1"/>
</dbReference>
<dbReference type="SUPFAM" id="SSF53300">
    <property type="entry name" value="vWA-like"/>
    <property type="match status" value="1"/>
</dbReference>
<dbReference type="SUPFAM" id="SSF82919">
    <property type="entry name" value="Zn-finger domain of Sec23/24"/>
    <property type="match status" value="1"/>
</dbReference>
<accession>Q876F4</accession>
<feature type="chain" id="PRO_0000295498" description="Protein transport protein SEC24-1">
    <location>
        <begin position="1"/>
        <end position="885"/>
    </location>
</feature>
<feature type="region of interest" description="Zinc finger-like">
    <location>
        <begin position="164"/>
        <end position="189"/>
    </location>
</feature>
<feature type="region of interest" description="Disordered" evidence="2">
    <location>
        <begin position="296"/>
        <end position="332"/>
    </location>
</feature>
<feature type="binding site" evidence="1">
    <location>
        <position position="164"/>
    </location>
    <ligand>
        <name>Zn(2+)</name>
        <dbReference type="ChEBI" id="CHEBI:29105"/>
    </ligand>
</feature>
<feature type="binding site" evidence="1">
    <location>
        <position position="167"/>
    </location>
    <ligand>
        <name>Zn(2+)</name>
        <dbReference type="ChEBI" id="CHEBI:29105"/>
    </ligand>
</feature>
<feature type="binding site" evidence="1">
    <location>
        <position position="186"/>
    </location>
    <ligand>
        <name>Zn(2+)</name>
        <dbReference type="ChEBI" id="CHEBI:29105"/>
    </ligand>
</feature>
<feature type="binding site" evidence="1">
    <location>
        <position position="189"/>
    </location>
    <ligand>
        <name>Zn(2+)</name>
        <dbReference type="ChEBI" id="CHEBI:29105"/>
    </ligand>
</feature>
<comment type="function">
    <text evidence="1">Component of the coat protein complex II (COPII) which promotes the formation of transport vesicles from the endoplasmic reticulum (ER). The coat has two main functions, the physical deformation of the endoplasmic reticulum membrane into vesicles and the selection of cargo molecules (By similarity).</text>
</comment>
<comment type="subunit">
    <text evidence="1">The COPII coat is composed of at least 5 proteins: the SEC23/24 complex, the SEC13/31 complex, and the protein SAR1. Golgi apparatus membrane; Peripheral membrane protein; Cytoplasmic side.</text>
</comment>
<comment type="subcellular location">
    <subcellularLocation>
        <location evidence="1">Cytoplasm</location>
    </subcellularLocation>
    <subcellularLocation>
        <location evidence="1">Cytoplasmic vesicle</location>
        <location evidence="1">COPII-coated vesicle membrane</location>
        <topology evidence="1">Peripheral membrane protein</topology>
        <orientation evidence="1">Cytoplasmic side</orientation>
    </subcellularLocation>
    <subcellularLocation>
        <location evidence="1">Endoplasmic reticulum membrane</location>
        <topology evidence="1">Peripheral membrane protein</topology>
        <orientation evidence="1">Cytoplasmic side</orientation>
    </subcellularLocation>
    <subcellularLocation>
        <location evidence="1">Golgi apparatus membrane</location>
        <topology evidence="1">Peripheral membrane protein</topology>
        <orientation evidence="1">Cytoplasmic side</orientation>
    </subcellularLocation>
</comment>
<comment type="similarity">
    <text evidence="3">Belongs to the SEC23/SEC24 family. SEC24 subfamily.</text>
</comment>
<gene>
    <name type="primary">SEC241</name>
</gene>